<geneLocation type="plasmid">
    <name>pSMED01</name>
</geneLocation>
<keyword id="KW-0378">Hydrolase</keyword>
<keyword id="KW-0614">Plasmid</keyword>
<feature type="chain" id="PRO_0000326803" description="Acylphosphatase">
    <location>
        <begin position="1"/>
        <end position="94"/>
    </location>
</feature>
<feature type="domain" description="Acylphosphatase-like" evidence="1">
    <location>
        <begin position="7"/>
        <end position="94"/>
    </location>
</feature>
<feature type="active site" evidence="1">
    <location>
        <position position="22"/>
    </location>
</feature>
<feature type="active site" evidence="1">
    <location>
        <position position="40"/>
    </location>
</feature>
<proteinExistence type="inferred from homology"/>
<organism>
    <name type="scientific">Sinorhizobium medicae (strain WSM419)</name>
    <name type="common">Ensifer medicae</name>
    <dbReference type="NCBI Taxonomy" id="366394"/>
    <lineage>
        <taxon>Bacteria</taxon>
        <taxon>Pseudomonadati</taxon>
        <taxon>Pseudomonadota</taxon>
        <taxon>Alphaproteobacteria</taxon>
        <taxon>Hyphomicrobiales</taxon>
        <taxon>Rhizobiaceae</taxon>
        <taxon>Sinorhizobium/Ensifer group</taxon>
        <taxon>Sinorhizobium</taxon>
    </lineage>
</organism>
<dbReference type="EC" id="3.6.1.7"/>
<dbReference type="EMBL" id="CP000739">
    <property type="protein sequence ID" value="ABR63003.1"/>
    <property type="molecule type" value="Genomic_DNA"/>
</dbReference>
<dbReference type="RefSeq" id="WP_011969825.1">
    <property type="nucleotide sequence ID" value="NC_009620.1"/>
</dbReference>
<dbReference type="RefSeq" id="YP_001312936.1">
    <property type="nucleotide sequence ID" value="NC_009620.1"/>
</dbReference>
<dbReference type="SMR" id="A6UH73"/>
<dbReference type="KEGG" id="smd:Smed_4198"/>
<dbReference type="PATRIC" id="fig|366394.8.peg.657"/>
<dbReference type="HOGENOM" id="CLU_141932_3_2_5"/>
<dbReference type="OrthoDB" id="5295388at2"/>
<dbReference type="Proteomes" id="UP000001108">
    <property type="component" value="Plasmid pSMED01"/>
</dbReference>
<dbReference type="GO" id="GO:0003998">
    <property type="term" value="F:acylphosphatase activity"/>
    <property type="evidence" value="ECO:0007669"/>
    <property type="project" value="UniProtKB-EC"/>
</dbReference>
<dbReference type="Gene3D" id="3.30.70.100">
    <property type="match status" value="1"/>
</dbReference>
<dbReference type="InterPro" id="IPR020456">
    <property type="entry name" value="Acylphosphatase"/>
</dbReference>
<dbReference type="InterPro" id="IPR001792">
    <property type="entry name" value="Acylphosphatase-like_dom"/>
</dbReference>
<dbReference type="InterPro" id="IPR036046">
    <property type="entry name" value="Acylphosphatase-like_dom_sf"/>
</dbReference>
<dbReference type="InterPro" id="IPR017968">
    <property type="entry name" value="Acylphosphatase_CS"/>
</dbReference>
<dbReference type="NCBIfam" id="NF010999">
    <property type="entry name" value="PRK14425.1"/>
    <property type="match status" value="1"/>
</dbReference>
<dbReference type="PANTHER" id="PTHR47268">
    <property type="entry name" value="ACYLPHOSPHATASE"/>
    <property type="match status" value="1"/>
</dbReference>
<dbReference type="PANTHER" id="PTHR47268:SF4">
    <property type="entry name" value="ACYLPHOSPHATASE"/>
    <property type="match status" value="1"/>
</dbReference>
<dbReference type="Pfam" id="PF00708">
    <property type="entry name" value="Acylphosphatase"/>
    <property type="match status" value="1"/>
</dbReference>
<dbReference type="PRINTS" id="PR00112">
    <property type="entry name" value="ACYLPHPHTASE"/>
</dbReference>
<dbReference type="SUPFAM" id="SSF54975">
    <property type="entry name" value="Acylphosphatase/BLUF domain-like"/>
    <property type="match status" value="1"/>
</dbReference>
<dbReference type="PROSITE" id="PS00150">
    <property type="entry name" value="ACYLPHOSPHATASE_1"/>
    <property type="match status" value="1"/>
</dbReference>
<dbReference type="PROSITE" id="PS00151">
    <property type="entry name" value="ACYLPHOSPHATASE_2"/>
    <property type="match status" value="1"/>
</dbReference>
<dbReference type="PROSITE" id="PS51160">
    <property type="entry name" value="ACYLPHOSPHATASE_3"/>
    <property type="match status" value="1"/>
</dbReference>
<comment type="catalytic activity">
    <reaction>
        <text>an acyl phosphate + H2O = a carboxylate + phosphate + H(+)</text>
        <dbReference type="Rhea" id="RHEA:14965"/>
        <dbReference type="ChEBI" id="CHEBI:15377"/>
        <dbReference type="ChEBI" id="CHEBI:15378"/>
        <dbReference type="ChEBI" id="CHEBI:29067"/>
        <dbReference type="ChEBI" id="CHEBI:43474"/>
        <dbReference type="ChEBI" id="CHEBI:59918"/>
        <dbReference type="EC" id="3.6.1.7"/>
    </reaction>
</comment>
<comment type="similarity">
    <text evidence="2">Belongs to the acylphosphatase family.</text>
</comment>
<accession>A6UH73</accession>
<evidence type="ECO:0000255" key="1">
    <source>
        <dbReference type="PROSITE-ProRule" id="PRU00520"/>
    </source>
</evidence>
<evidence type="ECO:0000305" key="2"/>
<protein>
    <recommendedName>
        <fullName>Acylphosphatase</fullName>
        <ecNumber>3.6.1.7</ecNumber>
    </recommendedName>
    <alternativeName>
        <fullName>Acylphosphate phosphohydrolase</fullName>
    </alternativeName>
</protein>
<reference key="1">
    <citation type="submission" date="2007-06" db="EMBL/GenBank/DDBJ databases">
        <title>Complete sequence of Sinorhizobium medicae WSM419 plasmid pSMED01.</title>
        <authorList>
            <consortium name="US DOE Joint Genome Institute"/>
            <person name="Copeland A."/>
            <person name="Lucas S."/>
            <person name="Lapidus A."/>
            <person name="Barry K."/>
            <person name="Glavina del Rio T."/>
            <person name="Dalin E."/>
            <person name="Tice H."/>
            <person name="Pitluck S."/>
            <person name="Chain P."/>
            <person name="Malfatti S."/>
            <person name="Shin M."/>
            <person name="Vergez L."/>
            <person name="Schmutz J."/>
            <person name="Larimer F."/>
            <person name="Land M."/>
            <person name="Hauser L."/>
            <person name="Kyrpides N."/>
            <person name="Mikhailova N."/>
            <person name="Reeve W.G."/>
            <person name="Richardson P."/>
        </authorList>
    </citation>
    <scope>NUCLEOTIDE SEQUENCE [LARGE SCALE GENOMIC DNA]</scope>
    <source>
        <strain>WSM419</strain>
    </source>
</reference>
<sequence>MTKDRRAALVRITGRVQGVCFRDWTREEAEKLGLDGWVRNESDGSVTALIAGPDGAVSRMLENFWKGPPGASIADVASEVASSVEAPAGFRITR</sequence>
<gene>
    <name type="primary">acyP</name>
    <name type="ordered locus">Smed_4198</name>
</gene>
<name>ACYP_SINMW</name>